<reference key="1">
    <citation type="journal article" date="1976" name="Biochim. Biophys. Acta">
        <title>Isolation, properties and primary structure of coypu and chinchilla pancreatic ribonuclease.</title>
        <authorList>
            <person name="van den Berg A."/>
            <person name="van den Hende-Timmer L."/>
            <person name="Beintema J.J."/>
        </authorList>
    </citation>
    <scope>PROTEIN SEQUENCE</scope>
    <scope>GLYCOSYLATION AT ASN-34</scope>
    <source>
        <tissue>Pancreas</tissue>
    </source>
</reference>
<gene>
    <name type="primary">RNASE1</name>
    <name type="synonym">RNS1</name>
</gene>
<comment type="function">
    <text evidence="1">Endonuclease that catalyzes the cleavage of RNA on the 3' side of pyrimidine nucleotides. Acts on single-stranded and double-stranded RNA (By similarity).</text>
</comment>
<comment type="catalytic activity">
    <reaction>
        <text>an [RNA] containing cytidine + H2O = an [RNA]-3'-cytidine-3'-phosphate + a 5'-hydroxy-ribonucleotide-3'-[RNA].</text>
        <dbReference type="EC" id="4.6.1.18"/>
    </reaction>
</comment>
<comment type="catalytic activity">
    <reaction>
        <text>an [RNA] containing uridine + H2O = an [RNA]-3'-uridine-3'-phosphate + a 5'-hydroxy-ribonucleotide-3'-[RNA].</text>
        <dbReference type="EC" id="4.6.1.18"/>
    </reaction>
</comment>
<comment type="subunit">
    <text evidence="1">Monomer. Interacts with and forms tight 1:1 complexes with RNH1. Dimerization of two such complexes may occur. Interaction with RNH1 inhibits this protein (By similarity).</text>
</comment>
<comment type="subcellular location">
    <subcellularLocation>
        <location>Secreted</location>
    </subcellularLocation>
</comment>
<comment type="tissue specificity">
    <text>Pancreas.</text>
</comment>
<comment type="similarity">
    <text evidence="4">Belongs to the pancreatic ribonuclease family.</text>
</comment>
<proteinExistence type="evidence at protein level"/>
<name>RNAS1_MYOCO</name>
<feature type="chain" id="PRO_0000057206" description="Ribonuclease pancreatic">
    <location>
        <begin position="1"/>
        <end position="128"/>
    </location>
</feature>
<feature type="region of interest" description="Disordered" evidence="2">
    <location>
        <begin position="1"/>
        <end position="28"/>
    </location>
</feature>
<feature type="compositionally biased region" description="Basic and acidic residues" evidence="2">
    <location>
        <begin position="1"/>
        <end position="15"/>
    </location>
</feature>
<feature type="active site" description="Proton acceptor" evidence="1">
    <location>
        <position position="12"/>
    </location>
</feature>
<feature type="active site" description="Proton donor" evidence="1">
    <location>
        <position position="119"/>
    </location>
</feature>
<feature type="binding site" evidence="1">
    <location>
        <position position="7"/>
    </location>
    <ligand>
        <name>substrate</name>
    </ligand>
</feature>
<feature type="binding site" evidence="1">
    <location>
        <position position="10"/>
    </location>
    <ligand>
        <name>substrate</name>
    </ligand>
</feature>
<feature type="binding site" evidence="1">
    <location>
        <begin position="41"/>
        <end position="45"/>
    </location>
    <ligand>
        <name>substrate</name>
    </ligand>
</feature>
<feature type="binding site" evidence="1">
    <location>
        <position position="66"/>
    </location>
    <ligand>
        <name>substrate</name>
    </ligand>
</feature>
<feature type="binding site" evidence="1">
    <location>
        <position position="85"/>
    </location>
    <ligand>
        <name>substrate</name>
    </ligand>
</feature>
<feature type="glycosylation site" description="N-linked (GlcNAc...) asparagine" evidence="3">
    <location>
        <position position="34"/>
    </location>
</feature>
<feature type="disulfide bond" evidence="1">
    <location>
        <begin position="26"/>
        <end position="84"/>
    </location>
</feature>
<feature type="disulfide bond" evidence="1">
    <location>
        <begin position="40"/>
        <end position="95"/>
    </location>
</feature>
<feature type="disulfide bond" evidence="1">
    <location>
        <begin position="58"/>
        <end position="110"/>
    </location>
</feature>
<feature type="disulfide bond" evidence="1">
    <location>
        <begin position="65"/>
        <end position="72"/>
    </location>
</feature>
<protein>
    <recommendedName>
        <fullName>Ribonuclease pancreatic</fullName>
        <ecNumber>4.6.1.18</ecNumber>
    </recommendedName>
    <alternativeName>
        <fullName>RNase 1</fullName>
    </alternativeName>
    <alternativeName>
        <fullName>RNase A</fullName>
    </alternativeName>
</protein>
<sequence>SESSAKKFERQHMDSRGSPSTNPNYCNEMMKSRNMTQGRCKPVNTFVHEPLADVQAVCFQKNVLCKNGQTNCYQSNSNMHITDCRVTSNSDYPNCSYRTSQEEKSIVVACEGNPYVPVHFDASVAASA</sequence>
<dbReference type="EC" id="4.6.1.18"/>
<dbReference type="PIR" id="A00822">
    <property type="entry name" value="NRCU"/>
</dbReference>
<dbReference type="SMR" id="P00676"/>
<dbReference type="GlyCosmos" id="P00676">
    <property type="glycosylation" value="1 site, No reported glycans"/>
</dbReference>
<dbReference type="iPTMnet" id="P00676"/>
<dbReference type="GO" id="GO:0005576">
    <property type="term" value="C:extracellular region"/>
    <property type="evidence" value="ECO:0007669"/>
    <property type="project" value="UniProtKB-SubCell"/>
</dbReference>
<dbReference type="GO" id="GO:0016829">
    <property type="term" value="F:lyase activity"/>
    <property type="evidence" value="ECO:0007669"/>
    <property type="project" value="UniProtKB-KW"/>
</dbReference>
<dbReference type="GO" id="GO:0003676">
    <property type="term" value="F:nucleic acid binding"/>
    <property type="evidence" value="ECO:0007669"/>
    <property type="project" value="InterPro"/>
</dbReference>
<dbReference type="GO" id="GO:0004522">
    <property type="term" value="F:ribonuclease A activity"/>
    <property type="evidence" value="ECO:0007669"/>
    <property type="project" value="UniProtKB-EC"/>
</dbReference>
<dbReference type="GO" id="GO:0050830">
    <property type="term" value="P:defense response to Gram-positive bacterium"/>
    <property type="evidence" value="ECO:0007669"/>
    <property type="project" value="TreeGrafter"/>
</dbReference>
<dbReference type="CDD" id="cd06265">
    <property type="entry name" value="RNase_A_canonical"/>
    <property type="match status" value="1"/>
</dbReference>
<dbReference type="FunFam" id="3.10.130.10:FF:000001">
    <property type="entry name" value="Ribonuclease pancreatic"/>
    <property type="match status" value="1"/>
</dbReference>
<dbReference type="Gene3D" id="3.10.130.10">
    <property type="entry name" value="Ribonuclease A-like domain"/>
    <property type="match status" value="1"/>
</dbReference>
<dbReference type="InterPro" id="IPR001427">
    <property type="entry name" value="RNaseA"/>
</dbReference>
<dbReference type="InterPro" id="IPR036816">
    <property type="entry name" value="RNaseA-like_dom_sf"/>
</dbReference>
<dbReference type="InterPro" id="IPR023411">
    <property type="entry name" value="RNaseA_AS"/>
</dbReference>
<dbReference type="InterPro" id="IPR023412">
    <property type="entry name" value="RNaseA_domain"/>
</dbReference>
<dbReference type="PANTHER" id="PTHR11437">
    <property type="entry name" value="RIBONUCLEASE"/>
    <property type="match status" value="1"/>
</dbReference>
<dbReference type="PANTHER" id="PTHR11437:SF24">
    <property type="entry name" value="RIBONUCLEASE PANCREATIC"/>
    <property type="match status" value="1"/>
</dbReference>
<dbReference type="Pfam" id="PF00074">
    <property type="entry name" value="RnaseA"/>
    <property type="match status" value="1"/>
</dbReference>
<dbReference type="PRINTS" id="PR00794">
    <property type="entry name" value="RIBONUCLEASE"/>
</dbReference>
<dbReference type="SMART" id="SM00092">
    <property type="entry name" value="RNAse_Pc"/>
    <property type="match status" value="1"/>
</dbReference>
<dbReference type="SUPFAM" id="SSF54076">
    <property type="entry name" value="RNase A-like"/>
    <property type="match status" value="1"/>
</dbReference>
<dbReference type="PROSITE" id="PS00127">
    <property type="entry name" value="RNASE_PANCREATIC"/>
    <property type="match status" value="1"/>
</dbReference>
<keyword id="KW-0903">Direct protein sequencing</keyword>
<keyword id="KW-1015">Disulfide bond</keyword>
<keyword id="KW-0255">Endonuclease</keyword>
<keyword id="KW-0325">Glycoprotein</keyword>
<keyword id="KW-0378">Hydrolase</keyword>
<keyword id="KW-0456">Lyase</keyword>
<keyword id="KW-0540">Nuclease</keyword>
<keyword id="KW-0964">Secreted</keyword>
<organism>
    <name type="scientific">Myocastor coypus</name>
    <name type="common">Coypu</name>
    <name type="synonym">Mus coypus</name>
    <dbReference type="NCBI Taxonomy" id="10157"/>
    <lineage>
        <taxon>Eukaryota</taxon>
        <taxon>Metazoa</taxon>
        <taxon>Chordata</taxon>
        <taxon>Craniata</taxon>
        <taxon>Vertebrata</taxon>
        <taxon>Euteleostomi</taxon>
        <taxon>Mammalia</taxon>
        <taxon>Eutheria</taxon>
        <taxon>Euarchontoglires</taxon>
        <taxon>Glires</taxon>
        <taxon>Rodentia</taxon>
        <taxon>Hystricomorpha</taxon>
        <taxon>Myocastoridae</taxon>
        <taxon>Myocastor</taxon>
    </lineage>
</organism>
<accession>P00676</accession>
<evidence type="ECO:0000250" key="1"/>
<evidence type="ECO:0000256" key="2">
    <source>
        <dbReference type="SAM" id="MobiDB-lite"/>
    </source>
</evidence>
<evidence type="ECO:0000269" key="3">
    <source>
    </source>
</evidence>
<evidence type="ECO:0000305" key="4"/>